<accession>A1BDR8</accession>
<feature type="chain" id="PRO_1000125812" description="Putative nickel-responsive regulator">
    <location>
        <begin position="1"/>
        <end position="134"/>
    </location>
</feature>
<feature type="binding site" evidence="1">
    <location>
        <position position="78"/>
    </location>
    <ligand>
        <name>Ni(2+)</name>
        <dbReference type="ChEBI" id="CHEBI:49786"/>
    </ligand>
</feature>
<feature type="binding site" evidence="1">
    <location>
        <position position="89"/>
    </location>
    <ligand>
        <name>Ni(2+)</name>
        <dbReference type="ChEBI" id="CHEBI:49786"/>
    </ligand>
</feature>
<feature type="binding site" evidence="1">
    <location>
        <position position="91"/>
    </location>
    <ligand>
        <name>Ni(2+)</name>
        <dbReference type="ChEBI" id="CHEBI:49786"/>
    </ligand>
</feature>
<feature type="binding site" evidence="1">
    <location>
        <position position="97"/>
    </location>
    <ligand>
        <name>Ni(2+)</name>
        <dbReference type="ChEBI" id="CHEBI:49786"/>
    </ligand>
</feature>
<keyword id="KW-0238">DNA-binding</keyword>
<keyword id="KW-0479">Metal-binding</keyword>
<keyword id="KW-0533">Nickel</keyword>
<keyword id="KW-1185">Reference proteome</keyword>
<keyword id="KW-0804">Transcription</keyword>
<keyword id="KW-0805">Transcription regulation</keyword>
<comment type="function">
    <text evidence="1">Transcriptional regulator.</text>
</comment>
<comment type="cofactor">
    <cofactor evidence="1">
        <name>Ni(2+)</name>
        <dbReference type="ChEBI" id="CHEBI:49786"/>
    </cofactor>
    <text evidence="1">Binds 1 nickel ion per subunit.</text>
</comment>
<comment type="similarity">
    <text evidence="1">Belongs to the transcriptional regulatory CopG/NikR family.</text>
</comment>
<name>NIKR_CHLPD</name>
<proteinExistence type="inferred from homology"/>
<dbReference type="EMBL" id="CP000492">
    <property type="protein sequence ID" value="ABL64545.1"/>
    <property type="molecule type" value="Genomic_DNA"/>
</dbReference>
<dbReference type="RefSeq" id="WP_011744378.1">
    <property type="nucleotide sequence ID" value="NC_008639.1"/>
</dbReference>
<dbReference type="SMR" id="A1BDR8"/>
<dbReference type="STRING" id="290317.Cpha266_0488"/>
<dbReference type="KEGG" id="cph:Cpha266_0488"/>
<dbReference type="eggNOG" id="COG0864">
    <property type="taxonomic scope" value="Bacteria"/>
</dbReference>
<dbReference type="HOGENOM" id="CLU_113319_1_2_10"/>
<dbReference type="OrthoDB" id="9806294at2"/>
<dbReference type="Proteomes" id="UP000008701">
    <property type="component" value="Chromosome"/>
</dbReference>
<dbReference type="GO" id="GO:0003677">
    <property type="term" value="F:DNA binding"/>
    <property type="evidence" value="ECO:0007669"/>
    <property type="project" value="UniProtKB-KW"/>
</dbReference>
<dbReference type="GO" id="GO:0003700">
    <property type="term" value="F:DNA-binding transcription factor activity"/>
    <property type="evidence" value="ECO:0007669"/>
    <property type="project" value="UniProtKB-UniRule"/>
</dbReference>
<dbReference type="GO" id="GO:0016151">
    <property type="term" value="F:nickel cation binding"/>
    <property type="evidence" value="ECO:0007669"/>
    <property type="project" value="UniProtKB-UniRule"/>
</dbReference>
<dbReference type="GO" id="GO:0010045">
    <property type="term" value="P:response to nickel cation"/>
    <property type="evidence" value="ECO:0007669"/>
    <property type="project" value="InterPro"/>
</dbReference>
<dbReference type="CDD" id="cd22231">
    <property type="entry name" value="RHH_NikR_HicB-like"/>
    <property type="match status" value="1"/>
</dbReference>
<dbReference type="Gene3D" id="3.30.70.1150">
    <property type="entry name" value="ACT-like. Chain A, domain 2"/>
    <property type="match status" value="1"/>
</dbReference>
<dbReference type="Gene3D" id="1.10.1220.10">
    <property type="entry name" value="Met repressor-like"/>
    <property type="match status" value="1"/>
</dbReference>
<dbReference type="HAMAP" id="MF_00476">
    <property type="entry name" value="NikR"/>
    <property type="match status" value="1"/>
</dbReference>
<dbReference type="InterPro" id="IPR027271">
    <property type="entry name" value="Acetolactate_synth/TF_NikR_C"/>
</dbReference>
<dbReference type="InterPro" id="IPR045865">
    <property type="entry name" value="ACT-like_dom_sf"/>
</dbReference>
<dbReference type="InterPro" id="IPR013321">
    <property type="entry name" value="Arc_rbn_hlx_hlx"/>
</dbReference>
<dbReference type="InterPro" id="IPR002145">
    <property type="entry name" value="CopG"/>
</dbReference>
<dbReference type="InterPro" id="IPR050192">
    <property type="entry name" value="CopG/NikR_regulator"/>
</dbReference>
<dbReference type="InterPro" id="IPR022988">
    <property type="entry name" value="Ni_resp_reg_NikR"/>
</dbReference>
<dbReference type="InterPro" id="IPR010985">
    <property type="entry name" value="Ribbon_hlx_hlx"/>
</dbReference>
<dbReference type="InterPro" id="IPR014864">
    <property type="entry name" value="TF_NikR_Ni-bd_C"/>
</dbReference>
<dbReference type="NCBIfam" id="NF001884">
    <property type="entry name" value="PRK00630.1"/>
    <property type="match status" value="1"/>
</dbReference>
<dbReference type="NCBIfam" id="NF002169">
    <property type="entry name" value="PRK01002.1"/>
    <property type="match status" value="1"/>
</dbReference>
<dbReference type="NCBIfam" id="NF002815">
    <property type="entry name" value="PRK02967.1"/>
    <property type="match status" value="1"/>
</dbReference>
<dbReference type="NCBIfam" id="NF003381">
    <property type="entry name" value="PRK04460.1"/>
    <property type="match status" value="1"/>
</dbReference>
<dbReference type="PANTHER" id="PTHR34719">
    <property type="entry name" value="NICKEL-RESPONSIVE REGULATOR"/>
    <property type="match status" value="1"/>
</dbReference>
<dbReference type="PANTHER" id="PTHR34719:SF2">
    <property type="entry name" value="NICKEL-RESPONSIVE REGULATOR"/>
    <property type="match status" value="1"/>
</dbReference>
<dbReference type="Pfam" id="PF08753">
    <property type="entry name" value="NikR_C"/>
    <property type="match status" value="1"/>
</dbReference>
<dbReference type="Pfam" id="PF01402">
    <property type="entry name" value="RHH_1"/>
    <property type="match status" value="1"/>
</dbReference>
<dbReference type="SUPFAM" id="SSF55021">
    <property type="entry name" value="ACT-like"/>
    <property type="match status" value="1"/>
</dbReference>
<dbReference type="SUPFAM" id="SSF47598">
    <property type="entry name" value="Ribbon-helix-helix"/>
    <property type="match status" value="1"/>
</dbReference>
<gene>
    <name type="ordered locus">Cpha266_0488</name>
</gene>
<organism>
    <name type="scientific">Chlorobium phaeobacteroides (strain DSM 266 / SMG 266 / 2430)</name>
    <dbReference type="NCBI Taxonomy" id="290317"/>
    <lineage>
        <taxon>Bacteria</taxon>
        <taxon>Pseudomonadati</taxon>
        <taxon>Chlorobiota</taxon>
        <taxon>Chlorobiia</taxon>
        <taxon>Chlorobiales</taxon>
        <taxon>Chlorobiaceae</taxon>
        <taxon>Chlorobium/Pelodictyon group</taxon>
        <taxon>Chlorobium</taxon>
    </lineage>
</organism>
<reference key="1">
    <citation type="submission" date="2006-12" db="EMBL/GenBank/DDBJ databases">
        <title>Complete sequence of Chlorobium phaeobacteroides DSM 266.</title>
        <authorList>
            <consortium name="US DOE Joint Genome Institute"/>
            <person name="Copeland A."/>
            <person name="Lucas S."/>
            <person name="Lapidus A."/>
            <person name="Barry K."/>
            <person name="Detter J.C."/>
            <person name="Glavina del Rio T."/>
            <person name="Hammon N."/>
            <person name="Israni S."/>
            <person name="Pitluck S."/>
            <person name="Goltsman E."/>
            <person name="Schmutz J."/>
            <person name="Larimer F."/>
            <person name="Land M."/>
            <person name="Hauser L."/>
            <person name="Mikhailova N."/>
            <person name="Li T."/>
            <person name="Overmann J."/>
            <person name="Bryant D.A."/>
            <person name="Richardson P."/>
        </authorList>
    </citation>
    <scope>NUCLEOTIDE SEQUENCE [LARGE SCALE GENOMIC DNA]</scope>
    <source>
        <strain>DSM 266 / SMG 266 / 2430</strain>
    </source>
</reference>
<evidence type="ECO:0000255" key="1">
    <source>
        <dbReference type="HAMAP-Rule" id="MF_00476"/>
    </source>
</evidence>
<sequence length="134" mass="15301">MSEIYRFGVSLDKSLIEAFDRHIQSRHYHNRSEALRDLIREELVRKKWTEGGTVAGAVIMTYDHHKRELVNRLLDIQHDFQKTIIASSHVHLDHDHCLEVIAVKGNAADVEQLSLKLKSLVGVKHLSLSISSAE</sequence>
<protein>
    <recommendedName>
        <fullName evidence="1">Putative nickel-responsive regulator</fullName>
    </recommendedName>
</protein>